<protein>
    <recommendedName>
        <fullName evidence="1">Thymidylate kinase</fullName>
        <ecNumber evidence="1">2.7.4.9</ecNumber>
    </recommendedName>
    <alternativeName>
        <fullName evidence="1">dTMP kinase</fullName>
    </alternativeName>
</protein>
<evidence type="ECO:0000255" key="1">
    <source>
        <dbReference type="HAMAP-Rule" id="MF_00165"/>
    </source>
</evidence>
<reference key="1">
    <citation type="submission" date="2006-11" db="EMBL/GenBank/DDBJ databases">
        <title>Sequence of Campylobacter fetus subsp. fetus 82-40.</title>
        <authorList>
            <person name="Fouts D.E."/>
            <person name="Nelson K.E."/>
        </authorList>
    </citation>
    <scope>NUCLEOTIDE SEQUENCE [LARGE SCALE GENOMIC DNA]</scope>
    <source>
        <strain>82-40</strain>
    </source>
</reference>
<organism>
    <name type="scientific">Campylobacter fetus subsp. fetus (strain 82-40)</name>
    <dbReference type="NCBI Taxonomy" id="360106"/>
    <lineage>
        <taxon>Bacteria</taxon>
        <taxon>Pseudomonadati</taxon>
        <taxon>Campylobacterota</taxon>
        <taxon>Epsilonproteobacteria</taxon>
        <taxon>Campylobacterales</taxon>
        <taxon>Campylobacteraceae</taxon>
        <taxon>Campylobacter</taxon>
    </lineage>
</organism>
<dbReference type="EC" id="2.7.4.9" evidence="1"/>
<dbReference type="EMBL" id="CP000487">
    <property type="protein sequence ID" value="ABK81884.1"/>
    <property type="molecule type" value="Genomic_DNA"/>
</dbReference>
<dbReference type="RefSeq" id="WP_011731993.1">
    <property type="nucleotide sequence ID" value="NC_008599.1"/>
</dbReference>
<dbReference type="SMR" id="A0RPD2"/>
<dbReference type="GeneID" id="61064727"/>
<dbReference type="KEGG" id="cff:CFF8240_0893"/>
<dbReference type="PATRIC" id="fig|360106.6.peg.865"/>
<dbReference type="eggNOG" id="COG0125">
    <property type="taxonomic scope" value="Bacteria"/>
</dbReference>
<dbReference type="HOGENOM" id="CLU_049131_0_0_7"/>
<dbReference type="Proteomes" id="UP000000760">
    <property type="component" value="Chromosome"/>
</dbReference>
<dbReference type="GO" id="GO:0005829">
    <property type="term" value="C:cytosol"/>
    <property type="evidence" value="ECO:0007669"/>
    <property type="project" value="TreeGrafter"/>
</dbReference>
<dbReference type="GO" id="GO:0005524">
    <property type="term" value="F:ATP binding"/>
    <property type="evidence" value="ECO:0007669"/>
    <property type="project" value="UniProtKB-UniRule"/>
</dbReference>
<dbReference type="GO" id="GO:0004798">
    <property type="term" value="F:dTMP kinase activity"/>
    <property type="evidence" value="ECO:0007669"/>
    <property type="project" value="UniProtKB-UniRule"/>
</dbReference>
<dbReference type="GO" id="GO:0006233">
    <property type="term" value="P:dTDP biosynthetic process"/>
    <property type="evidence" value="ECO:0007669"/>
    <property type="project" value="InterPro"/>
</dbReference>
<dbReference type="GO" id="GO:0006235">
    <property type="term" value="P:dTTP biosynthetic process"/>
    <property type="evidence" value="ECO:0007669"/>
    <property type="project" value="UniProtKB-UniRule"/>
</dbReference>
<dbReference type="GO" id="GO:0006227">
    <property type="term" value="P:dUDP biosynthetic process"/>
    <property type="evidence" value="ECO:0007669"/>
    <property type="project" value="TreeGrafter"/>
</dbReference>
<dbReference type="CDD" id="cd01672">
    <property type="entry name" value="TMPK"/>
    <property type="match status" value="1"/>
</dbReference>
<dbReference type="Gene3D" id="3.40.50.300">
    <property type="entry name" value="P-loop containing nucleotide triphosphate hydrolases"/>
    <property type="match status" value="1"/>
</dbReference>
<dbReference type="HAMAP" id="MF_00165">
    <property type="entry name" value="Thymidylate_kinase"/>
    <property type="match status" value="1"/>
</dbReference>
<dbReference type="InterPro" id="IPR027417">
    <property type="entry name" value="P-loop_NTPase"/>
</dbReference>
<dbReference type="InterPro" id="IPR039430">
    <property type="entry name" value="Thymidylate_kin-like_dom"/>
</dbReference>
<dbReference type="InterPro" id="IPR018094">
    <property type="entry name" value="Thymidylate_kinase"/>
</dbReference>
<dbReference type="NCBIfam" id="TIGR00041">
    <property type="entry name" value="DTMP_kinase"/>
    <property type="match status" value="1"/>
</dbReference>
<dbReference type="PANTHER" id="PTHR10344">
    <property type="entry name" value="THYMIDYLATE KINASE"/>
    <property type="match status" value="1"/>
</dbReference>
<dbReference type="PANTHER" id="PTHR10344:SF4">
    <property type="entry name" value="UMP-CMP KINASE 2, MITOCHONDRIAL"/>
    <property type="match status" value="1"/>
</dbReference>
<dbReference type="Pfam" id="PF02223">
    <property type="entry name" value="Thymidylate_kin"/>
    <property type="match status" value="1"/>
</dbReference>
<dbReference type="SUPFAM" id="SSF52540">
    <property type="entry name" value="P-loop containing nucleoside triphosphate hydrolases"/>
    <property type="match status" value="1"/>
</dbReference>
<name>KTHY_CAMFF</name>
<proteinExistence type="inferred from homology"/>
<keyword id="KW-0067">ATP-binding</keyword>
<keyword id="KW-0418">Kinase</keyword>
<keyword id="KW-0545">Nucleotide biosynthesis</keyword>
<keyword id="KW-0547">Nucleotide-binding</keyword>
<keyword id="KW-0808">Transferase</keyword>
<accession>A0RPD2</accession>
<sequence length="192" mass="21789">MLVNFEGVDGVGKSTQISLLKEFRNDAVITKEPGGTEFGLMVRDYLLKNASKISNKTEIFLFLADRAEHYEKVLKPNYANLVLNDRSFVSGMAYAMANDSSLDIGLLLDLNKFALNSDLGDKFVFLKADEILLRNRLFSRGTSDEIEMRGIEYLMRVQGFMSIILSDLKFDVLEIDASLEVLEIQEKIRKFI</sequence>
<gene>
    <name evidence="1" type="primary">tmk</name>
    <name type="ordered locus">CFF8240_0893</name>
</gene>
<feature type="chain" id="PRO_1000123564" description="Thymidylate kinase">
    <location>
        <begin position="1"/>
        <end position="192"/>
    </location>
</feature>
<feature type="binding site" evidence="1">
    <location>
        <begin position="7"/>
        <end position="14"/>
    </location>
    <ligand>
        <name>ATP</name>
        <dbReference type="ChEBI" id="CHEBI:30616"/>
    </ligand>
</feature>
<comment type="function">
    <text evidence="1">Phosphorylation of dTMP to form dTDP in both de novo and salvage pathways of dTTP synthesis.</text>
</comment>
<comment type="catalytic activity">
    <reaction evidence="1">
        <text>dTMP + ATP = dTDP + ADP</text>
        <dbReference type="Rhea" id="RHEA:13517"/>
        <dbReference type="ChEBI" id="CHEBI:30616"/>
        <dbReference type="ChEBI" id="CHEBI:58369"/>
        <dbReference type="ChEBI" id="CHEBI:63528"/>
        <dbReference type="ChEBI" id="CHEBI:456216"/>
        <dbReference type="EC" id="2.7.4.9"/>
    </reaction>
</comment>
<comment type="similarity">
    <text evidence="1">Belongs to the thymidylate kinase family.</text>
</comment>